<gene>
    <name evidence="1 3" type="primary">pncB</name>
    <name type="ordered locus">ACIAD3562</name>
</gene>
<reference key="1">
    <citation type="journal article" date="2004" name="Nucleic Acids Res.">
        <title>Unique features revealed by the genome sequence of Acinetobacter sp. ADP1, a versatile and naturally transformation competent bacterium.</title>
        <authorList>
            <person name="Barbe V."/>
            <person name="Vallenet D."/>
            <person name="Fonknechten N."/>
            <person name="Kreimeyer A."/>
            <person name="Oztas S."/>
            <person name="Labarre L."/>
            <person name="Cruveiller S."/>
            <person name="Robert C."/>
            <person name="Duprat S."/>
            <person name="Wincker P."/>
            <person name="Ornston L.N."/>
            <person name="Weissenbach J."/>
            <person name="Marliere P."/>
            <person name="Cohen G.N."/>
            <person name="Medigue C."/>
        </authorList>
    </citation>
    <scope>NUCLEOTIDE SEQUENCE [LARGE SCALE GENOMIC DNA]</scope>
    <source>
        <strain>ATCC 33305 / BD413 / ADP1</strain>
    </source>
</reference>
<reference key="2">
    <citation type="journal article" date="2010" name="J. Biol. Chem.">
        <title>Genomics-driven reconstruction of acinetobacter NAD metabolism: insights for antibacterial target selection.</title>
        <authorList>
            <person name="Sorci L."/>
            <person name="Blaby I."/>
            <person name="De Ingeniis J."/>
            <person name="Gerdes S."/>
            <person name="Raffaelli N."/>
            <person name="de Crecy Lagard V."/>
            <person name="Osterman A."/>
        </authorList>
    </citation>
    <scope>FUNCTION</scope>
    <scope>CATALYTIC ACTIVITY</scope>
    <scope>ACTIVITY REGULATION</scope>
    <scope>BIOPHYSICOCHEMICAL PROPERTIES</scope>
    <scope>PATHWAY</scope>
    <scope>DISRUPTION PHENOTYPE</scope>
    <source>
        <strain>ATCC 33305 / BD413 / ADP1</strain>
    </source>
</reference>
<comment type="function">
    <text evidence="2">Catalyzes the synthesis of beta-nicotinate D-ribonucleotide from nicotinate and 5-phospho-D-ribose 1-phosphate at the expense of ATP (PubMed:20926389). Functions in the deamidating salvage pathway for production of NAD from nicotinamide (PubMed:20926389). Displays a strict preference for nicotinate over nicotinamide substrate (PubMed:20926389).</text>
</comment>
<comment type="catalytic activity">
    <reaction evidence="1 2">
        <text>nicotinate + 5-phospho-alpha-D-ribose 1-diphosphate + ATP + H2O = nicotinate beta-D-ribonucleotide + ADP + phosphate + diphosphate</text>
        <dbReference type="Rhea" id="RHEA:36163"/>
        <dbReference type="ChEBI" id="CHEBI:15377"/>
        <dbReference type="ChEBI" id="CHEBI:30616"/>
        <dbReference type="ChEBI" id="CHEBI:32544"/>
        <dbReference type="ChEBI" id="CHEBI:33019"/>
        <dbReference type="ChEBI" id="CHEBI:43474"/>
        <dbReference type="ChEBI" id="CHEBI:57502"/>
        <dbReference type="ChEBI" id="CHEBI:58017"/>
        <dbReference type="ChEBI" id="CHEBI:456216"/>
        <dbReference type="EC" id="6.3.4.21"/>
    </reaction>
    <physiologicalReaction direction="left-to-right" evidence="2">
        <dbReference type="Rhea" id="RHEA:36164"/>
    </physiologicalReaction>
</comment>
<comment type="activity regulation">
    <text evidence="2">100-fold more active in the presence of saturating ATP.</text>
</comment>
<comment type="biophysicochemical properties">
    <kinetics>
        <KM evidence="2">0.2 uM for nicotinate</KM>
        <KM evidence="2">6900 uM for nicotinamide</KM>
        <text evidence="2">kcat is 0.40 sec(-1) with nicotinate as substrate. kcat is 0.004 sec(-1) with nicotinamide as substrate.</text>
    </kinetics>
</comment>
<comment type="pathway">
    <text evidence="1 2">Cofactor biosynthesis; NAD(+) biosynthesis; nicotinate D-ribonucleotide from nicotinate: step 1/1.</text>
</comment>
<comment type="PTM">
    <text evidence="1">Transiently phosphorylated on a His residue during the reaction cycle. Phosphorylation strongly increases the affinity for substrates and increases the rate of nicotinate D-ribonucleotide production. Dephosphorylation regenerates the low-affinity form of the enzyme, leading to product release.</text>
</comment>
<comment type="disruption phenotype">
    <text evidence="2">The nadB-pncB double mutant loses the ability to grow on minimal medium supplemented by 0.1 mm nicotinate, but it can grow normally in the presence of 0.1 mm nicotinamide.</text>
</comment>
<comment type="similarity">
    <text evidence="1">Belongs to the NAPRTase family.</text>
</comment>
<proteinExistence type="evidence at protein level"/>
<evidence type="ECO:0000255" key="1">
    <source>
        <dbReference type="HAMAP-Rule" id="MF_00570"/>
    </source>
</evidence>
<evidence type="ECO:0000269" key="2">
    <source>
    </source>
</evidence>
<evidence type="ECO:0000303" key="3">
    <source>
    </source>
</evidence>
<organism>
    <name type="scientific">Acinetobacter baylyi (strain ATCC 33305 / BD413 / ADP1)</name>
    <dbReference type="NCBI Taxonomy" id="62977"/>
    <lineage>
        <taxon>Bacteria</taxon>
        <taxon>Pseudomonadati</taxon>
        <taxon>Pseudomonadota</taxon>
        <taxon>Gammaproteobacteria</taxon>
        <taxon>Moraxellales</taxon>
        <taxon>Moraxellaceae</taxon>
        <taxon>Acinetobacter</taxon>
    </lineage>
</organism>
<dbReference type="EC" id="6.3.4.21" evidence="1 2"/>
<dbReference type="EMBL" id="CR543861">
    <property type="protein sequence ID" value="CAG70204.1"/>
    <property type="molecule type" value="Genomic_DNA"/>
</dbReference>
<dbReference type="SMR" id="Q6F6W1"/>
<dbReference type="STRING" id="202950.GCA_001485005_01652"/>
<dbReference type="KEGG" id="aci:ACIAD3562"/>
<dbReference type="eggNOG" id="COG1488">
    <property type="taxonomic scope" value="Bacteria"/>
</dbReference>
<dbReference type="HOGENOM" id="CLU_030991_1_0_6"/>
<dbReference type="UniPathway" id="UPA00253">
    <property type="reaction ID" value="UER00457"/>
</dbReference>
<dbReference type="Proteomes" id="UP000000430">
    <property type="component" value="Chromosome"/>
</dbReference>
<dbReference type="GO" id="GO:0005829">
    <property type="term" value="C:cytosol"/>
    <property type="evidence" value="ECO:0007669"/>
    <property type="project" value="TreeGrafter"/>
</dbReference>
<dbReference type="GO" id="GO:0004516">
    <property type="term" value="F:nicotinate phosphoribosyltransferase activity"/>
    <property type="evidence" value="ECO:0007669"/>
    <property type="project" value="UniProtKB-UniRule"/>
</dbReference>
<dbReference type="GO" id="GO:0034355">
    <property type="term" value="P:NAD biosynthetic process via the salvage pathway"/>
    <property type="evidence" value="ECO:0007669"/>
    <property type="project" value="TreeGrafter"/>
</dbReference>
<dbReference type="CDD" id="cd01401">
    <property type="entry name" value="PncB_like"/>
    <property type="match status" value="1"/>
</dbReference>
<dbReference type="Gene3D" id="3.20.140.10">
    <property type="entry name" value="nicotinate phosphoribosyltransferase"/>
    <property type="match status" value="1"/>
</dbReference>
<dbReference type="HAMAP" id="MF_00570">
    <property type="entry name" value="NAPRTase"/>
    <property type="match status" value="1"/>
</dbReference>
<dbReference type="InterPro" id="IPR041525">
    <property type="entry name" value="N/Namide_PRibTrfase"/>
</dbReference>
<dbReference type="InterPro" id="IPR040727">
    <property type="entry name" value="NAPRTase_N"/>
</dbReference>
<dbReference type="InterPro" id="IPR006406">
    <property type="entry name" value="Nic_PRibTrfase"/>
</dbReference>
<dbReference type="InterPro" id="IPR007229">
    <property type="entry name" value="Nic_PRibTrfase-Fam"/>
</dbReference>
<dbReference type="InterPro" id="IPR036068">
    <property type="entry name" value="Nicotinate_pribotase-like_C"/>
</dbReference>
<dbReference type="NCBIfam" id="TIGR01514">
    <property type="entry name" value="NAPRTase"/>
    <property type="match status" value="1"/>
</dbReference>
<dbReference type="NCBIfam" id="NF003704">
    <property type="entry name" value="PRK05321.1"/>
    <property type="match status" value="1"/>
</dbReference>
<dbReference type="PANTHER" id="PTHR11098">
    <property type="entry name" value="NICOTINATE PHOSPHORIBOSYLTRANSFERASE"/>
    <property type="match status" value="1"/>
</dbReference>
<dbReference type="PANTHER" id="PTHR11098:SF1">
    <property type="entry name" value="NICOTINATE PHOSPHORIBOSYLTRANSFERASE"/>
    <property type="match status" value="1"/>
</dbReference>
<dbReference type="Pfam" id="PF04095">
    <property type="entry name" value="NAPRTase"/>
    <property type="match status" value="1"/>
</dbReference>
<dbReference type="Pfam" id="PF17767">
    <property type="entry name" value="NAPRTase_N"/>
    <property type="match status" value="1"/>
</dbReference>
<dbReference type="PIRSF" id="PIRSF000484">
    <property type="entry name" value="NAPRT"/>
    <property type="match status" value="1"/>
</dbReference>
<dbReference type="SUPFAM" id="SSF51690">
    <property type="entry name" value="Nicotinate/Quinolinate PRTase C-terminal domain-like"/>
    <property type="match status" value="1"/>
</dbReference>
<dbReference type="SUPFAM" id="SSF54675">
    <property type="entry name" value="Nicotinate/Quinolinate PRTase N-terminal domain-like"/>
    <property type="match status" value="1"/>
</dbReference>
<accession>Q6F6W1</accession>
<sequence length="407" mass="47576">MLSMSPIIHSLLDTDLYKFTMLQVVLHQFPQTHSVYHFRCRNLDETQYPLTDILDDLNEQLDHLCTLKFKDDELQYLRSFRFIKSDFVDYLELFQLKRRFITAGIDEEGRLDIWVEGPMVQAMMFEIFVLAIVNELYFRRIRSDAVLEEGERRLQAKLALLEQYQTQHQSDEPPFLVSDFGTRRRYSFEWQKHVIAAFHHHFPNIFRGTSNVLLAKELNITPIGTMAHEFLQAFQALDVRLRDFQKAALETWVQEYRGDLGIALTDVVGMDAFLRDFDLYFAKLFDGLRHDSGDPYEWGDKAYAHYRKLKIDTKTKMLTFSDGLNLEKAWELHQYFKGRFKVSFGIGTNLTNDMGQTPLNIVLKLVECNGQSVAKISDSPGKTMTDNDTFLAYLRQVFQIAEEEPVA</sequence>
<name>PNCB_ACIAD</name>
<feature type="chain" id="PRO_0000205816" description="Nicotinate phosphoribosyltransferase">
    <location>
        <begin position="1"/>
        <end position="407"/>
    </location>
</feature>
<feature type="modified residue" description="Phosphohistidine; by autocatalysis" evidence="1">
    <location>
        <position position="228"/>
    </location>
</feature>
<keyword id="KW-0436">Ligase</keyword>
<keyword id="KW-0597">Phosphoprotein</keyword>
<keyword id="KW-0662">Pyridine nucleotide biosynthesis</keyword>
<protein>
    <recommendedName>
        <fullName evidence="1 3">Nicotinate phosphoribosyltransferase</fullName>
        <shortName evidence="1">NAPRTase</shortName>
        <ecNumber evidence="1 2">6.3.4.21</ecNumber>
    </recommendedName>
</protein>